<organism>
    <name type="scientific">Mycobacterium bovis (strain BCG / Tokyo 172 / ATCC 35737 / TMC 1019)</name>
    <dbReference type="NCBI Taxonomy" id="561275"/>
    <lineage>
        <taxon>Bacteria</taxon>
        <taxon>Bacillati</taxon>
        <taxon>Actinomycetota</taxon>
        <taxon>Actinomycetes</taxon>
        <taxon>Mycobacteriales</taxon>
        <taxon>Mycobacteriaceae</taxon>
        <taxon>Mycobacterium</taxon>
        <taxon>Mycobacterium tuberculosis complex</taxon>
    </lineage>
</organism>
<evidence type="ECO:0000250" key="1"/>
<evidence type="ECO:0000255" key="2">
    <source>
        <dbReference type="HAMAP-Rule" id="MF_00403"/>
    </source>
</evidence>
<evidence type="ECO:0000256" key="3">
    <source>
        <dbReference type="SAM" id="MobiDB-lite"/>
    </source>
</evidence>
<evidence type="ECO:0000305" key="4"/>
<proteinExistence type="inferred from homology"/>
<feature type="chain" id="PRO_1000134645" description="Small ribosomal subunit protein uS12">
    <location>
        <begin position="1"/>
        <end position="124"/>
    </location>
</feature>
<feature type="region of interest" description="Disordered" evidence="3">
    <location>
        <begin position="105"/>
        <end position="124"/>
    </location>
</feature>
<feature type="compositionally biased region" description="Basic residues" evidence="3">
    <location>
        <begin position="108"/>
        <end position="118"/>
    </location>
</feature>
<feature type="modified residue" description="3-methylthioaspartic acid" evidence="1">
    <location>
        <position position="89"/>
    </location>
</feature>
<protein>
    <recommendedName>
        <fullName evidence="2">Small ribosomal subunit protein uS12</fullName>
    </recommendedName>
    <alternativeName>
        <fullName evidence="4">30S ribosomal protein S12</fullName>
    </alternativeName>
</protein>
<name>RS12_MYCBT</name>
<comment type="function">
    <text evidence="2">With S4 and S5 plays an important role in translational accuracy.</text>
</comment>
<comment type="function">
    <text evidence="2">Interacts with and stabilizes bases of the 16S rRNA that are involved in tRNA selection in the A site and with the mRNA backbone. Located at the interface of the 30S and 50S subunits, it traverses the body of the 30S subunit contacting proteins on the other side and probably holding the rRNA structure together. The combined cluster of proteins S8, S12 and S17 appears to hold together the shoulder and platform of the 30S subunit.</text>
</comment>
<comment type="subunit">
    <text evidence="2">Part of the 30S ribosomal subunit. Contacts proteins S8 and S17. May interact with IF1 in the 30S initiation complex.</text>
</comment>
<comment type="similarity">
    <text evidence="2">Belongs to the universal ribosomal protein uS12 family.</text>
</comment>
<gene>
    <name evidence="2" type="primary">rpsL</name>
    <name type="ordered locus">JTY_0701</name>
</gene>
<accession>C1AL15</accession>
<sequence>MPTIQQLVRKGRRDKISKVKTAALKGSPQRRGVCTRVYTTTPKKPNSALRKVARVKLTSQVEVTAYIPGEGHNLQEHSMVLVRGGRVKDLPGVRYKIIRGSLDTQGVKNRKQARSRYGAKKEKG</sequence>
<dbReference type="EMBL" id="AP010918">
    <property type="protein sequence ID" value="BAH24994.1"/>
    <property type="molecule type" value="Genomic_DNA"/>
</dbReference>
<dbReference type="RefSeq" id="WP_003403453.1">
    <property type="nucleotide sequence ID" value="NZ_CP014566.1"/>
</dbReference>
<dbReference type="SMR" id="C1AL15"/>
<dbReference type="GeneID" id="45424644"/>
<dbReference type="KEGG" id="mbt:JTY_0701"/>
<dbReference type="HOGENOM" id="CLU_104295_1_2_11"/>
<dbReference type="GO" id="GO:0015935">
    <property type="term" value="C:small ribosomal subunit"/>
    <property type="evidence" value="ECO:0007669"/>
    <property type="project" value="InterPro"/>
</dbReference>
<dbReference type="GO" id="GO:0019843">
    <property type="term" value="F:rRNA binding"/>
    <property type="evidence" value="ECO:0007669"/>
    <property type="project" value="UniProtKB-UniRule"/>
</dbReference>
<dbReference type="GO" id="GO:0003735">
    <property type="term" value="F:structural constituent of ribosome"/>
    <property type="evidence" value="ECO:0007669"/>
    <property type="project" value="InterPro"/>
</dbReference>
<dbReference type="GO" id="GO:0000049">
    <property type="term" value="F:tRNA binding"/>
    <property type="evidence" value="ECO:0007669"/>
    <property type="project" value="UniProtKB-UniRule"/>
</dbReference>
<dbReference type="GO" id="GO:0006412">
    <property type="term" value="P:translation"/>
    <property type="evidence" value="ECO:0007669"/>
    <property type="project" value="UniProtKB-UniRule"/>
</dbReference>
<dbReference type="CDD" id="cd03368">
    <property type="entry name" value="Ribosomal_S12"/>
    <property type="match status" value="1"/>
</dbReference>
<dbReference type="FunFam" id="2.40.50.140:FF:000001">
    <property type="entry name" value="30S ribosomal protein S12"/>
    <property type="match status" value="1"/>
</dbReference>
<dbReference type="Gene3D" id="2.40.50.140">
    <property type="entry name" value="Nucleic acid-binding proteins"/>
    <property type="match status" value="1"/>
</dbReference>
<dbReference type="HAMAP" id="MF_00403_B">
    <property type="entry name" value="Ribosomal_uS12_B"/>
    <property type="match status" value="1"/>
</dbReference>
<dbReference type="InterPro" id="IPR012340">
    <property type="entry name" value="NA-bd_OB-fold"/>
</dbReference>
<dbReference type="InterPro" id="IPR006032">
    <property type="entry name" value="Ribosomal_uS12"/>
</dbReference>
<dbReference type="InterPro" id="IPR005679">
    <property type="entry name" value="Ribosomal_uS12_bac"/>
</dbReference>
<dbReference type="NCBIfam" id="TIGR00981">
    <property type="entry name" value="rpsL_bact"/>
    <property type="match status" value="1"/>
</dbReference>
<dbReference type="PANTHER" id="PTHR11652">
    <property type="entry name" value="30S RIBOSOMAL PROTEIN S12 FAMILY MEMBER"/>
    <property type="match status" value="1"/>
</dbReference>
<dbReference type="Pfam" id="PF00164">
    <property type="entry name" value="Ribosom_S12_S23"/>
    <property type="match status" value="1"/>
</dbReference>
<dbReference type="PIRSF" id="PIRSF002133">
    <property type="entry name" value="Ribosomal_S12/S23"/>
    <property type="match status" value="1"/>
</dbReference>
<dbReference type="PRINTS" id="PR01034">
    <property type="entry name" value="RIBOSOMALS12"/>
</dbReference>
<dbReference type="SUPFAM" id="SSF50249">
    <property type="entry name" value="Nucleic acid-binding proteins"/>
    <property type="match status" value="1"/>
</dbReference>
<dbReference type="PROSITE" id="PS00055">
    <property type="entry name" value="RIBOSOMAL_S12"/>
    <property type="match status" value="1"/>
</dbReference>
<keyword id="KW-0488">Methylation</keyword>
<keyword id="KW-0687">Ribonucleoprotein</keyword>
<keyword id="KW-0689">Ribosomal protein</keyword>
<keyword id="KW-0694">RNA-binding</keyword>
<keyword id="KW-0699">rRNA-binding</keyword>
<keyword id="KW-0820">tRNA-binding</keyword>
<reference key="1">
    <citation type="journal article" date="2009" name="Vaccine">
        <title>Whole genome sequence analysis of Mycobacterium bovis bacillus Calmette-Guerin (BCG) Tokyo 172: a comparative study of BCG vaccine substrains.</title>
        <authorList>
            <person name="Seki M."/>
            <person name="Honda I."/>
            <person name="Fujita I."/>
            <person name="Yano I."/>
            <person name="Yamamoto S."/>
            <person name="Koyama A."/>
        </authorList>
    </citation>
    <scope>NUCLEOTIDE SEQUENCE [LARGE SCALE GENOMIC DNA]</scope>
    <source>
        <strain>BCG / Tokyo 172 / ATCC 35737 / TMC 1019</strain>
    </source>
</reference>